<comment type="function">
    <text evidence="1">Cell wall formation. Adds enolpyruvyl to UDP-N-acetylglucosamine.</text>
</comment>
<comment type="catalytic activity">
    <reaction evidence="1">
        <text>phosphoenolpyruvate + UDP-N-acetyl-alpha-D-glucosamine = UDP-N-acetyl-3-O-(1-carboxyvinyl)-alpha-D-glucosamine + phosphate</text>
        <dbReference type="Rhea" id="RHEA:18681"/>
        <dbReference type="ChEBI" id="CHEBI:43474"/>
        <dbReference type="ChEBI" id="CHEBI:57705"/>
        <dbReference type="ChEBI" id="CHEBI:58702"/>
        <dbReference type="ChEBI" id="CHEBI:68483"/>
        <dbReference type="EC" id="2.5.1.7"/>
    </reaction>
</comment>
<comment type="pathway">
    <text evidence="1">Cell wall biogenesis; peptidoglycan biosynthesis.</text>
</comment>
<comment type="subcellular location">
    <subcellularLocation>
        <location evidence="1">Cytoplasm</location>
    </subcellularLocation>
</comment>
<comment type="similarity">
    <text evidence="1">Belongs to the EPSP synthase family. MurA subfamily.</text>
</comment>
<protein>
    <recommendedName>
        <fullName evidence="1">UDP-N-acetylglucosamine 1-carboxyvinyltransferase</fullName>
        <ecNumber evidence="1">2.5.1.7</ecNumber>
    </recommendedName>
    <alternativeName>
        <fullName evidence="1">Enoylpyruvate transferase</fullName>
    </alternativeName>
    <alternativeName>
        <fullName evidence="1">UDP-N-acetylglucosamine enolpyruvyl transferase</fullName>
        <shortName evidence="1">EPT</shortName>
    </alternativeName>
</protein>
<organism>
    <name type="scientific">Brucella suis (strain ATCC 23445 / NCTC 10510)</name>
    <dbReference type="NCBI Taxonomy" id="470137"/>
    <lineage>
        <taxon>Bacteria</taxon>
        <taxon>Pseudomonadati</taxon>
        <taxon>Pseudomonadota</taxon>
        <taxon>Alphaproteobacteria</taxon>
        <taxon>Hyphomicrobiales</taxon>
        <taxon>Brucellaceae</taxon>
        <taxon>Brucella/Ochrobactrum group</taxon>
        <taxon>Brucella</taxon>
    </lineage>
</organism>
<sequence length="429" mass="45719">MDRIKIVGGNKLNGVIPISGAKNAALPLMIASLLTDDTLTLENVPHLADVEQLIRILSNHGVDYSVNGRREHQNGPYSRTIHFTARNIVDTTAPYELVSRMRASFWVIGPLLARMGEANVSLPGGCAIGTRPVDLLLDALLALGAEIDIENGYAKAKARNGLVGARYKFPKVSVGATHVMLMAATLAKGETIIENAAREPEVANLADCLNAMGAKISGAGSSTIHVQGVTNLSGARVRIIPDRIEAGTYAMAVAMTGGDVLLEGAQESQLSCVLETLRQAGAEINETNSGLRVVRNGHGIQPVDITTDPFPGFPTDLQAQFMGLMTRAKGTSHITETIFENRFMHVQELARLGAKISLSGQTATVEGVERLKGAQVMATDLRASVSLVIAGLAAEGETIVNRVYHLDRGFERLEEKLSRCGADVKRISG</sequence>
<accession>B0CJN2</accession>
<gene>
    <name evidence="1" type="primary">murA</name>
    <name type="ordered locus">BSUIS_A0277</name>
</gene>
<proteinExistence type="inferred from homology"/>
<reference key="1">
    <citation type="submission" date="2007-12" db="EMBL/GenBank/DDBJ databases">
        <title>Brucella suis ATCC 23445 whole genome shotgun sequencing project.</title>
        <authorList>
            <person name="Setubal J.C."/>
            <person name="Bowns C."/>
            <person name="Boyle S."/>
            <person name="Crasta O.R."/>
            <person name="Czar M.J."/>
            <person name="Dharmanolla C."/>
            <person name="Gillespie J.J."/>
            <person name="Kenyon R.W."/>
            <person name="Lu J."/>
            <person name="Mane S."/>
            <person name="Mohapatra S."/>
            <person name="Nagrani S."/>
            <person name="Purkayastha A."/>
            <person name="Rajasimha H.K."/>
            <person name="Shallom J.M."/>
            <person name="Shallom S."/>
            <person name="Shukla M."/>
            <person name="Snyder E.E."/>
            <person name="Sobral B.W."/>
            <person name="Wattam A.R."/>
            <person name="Will R."/>
            <person name="Williams K."/>
            <person name="Yoo H."/>
            <person name="Bruce D."/>
            <person name="Detter C."/>
            <person name="Munk C."/>
            <person name="Brettin T.S."/>
        </authorList>
    </citation>
    <scope>NUCLEOTIDE SEQUENCE [LARGE SCALE GENOMIC DNA]</scope>
    <source>
        <strain>ATCC 23445 / NCTC 10510</strain>
    </source>
</reference>
<name>MURA_BRUSI</name>
<evidence type="ECO:0000255" key="1">
    <source>
        <dbReference type="HAMAP-Rule" id="MF_00111"/>
    </source>
</evidence>
<feature type="chain" id="PRO_1000075965" description="UDP-N-acetylglucosamine 1-carboxyvinyltransferase">
    <location>
        <begin position="1"/>
        <end position="429"/>
    </location>
</feature>
<feature type="active site" description="Proton donor" evidence="1">
    <location>
        <position position="126"/>
    </location>
</feature>
<feature type="binding site" evidence="1">
    <location>
        <begin position="22"/>
        <end position="23"/>
    </location>
    <ligand>
        <name>phosphoenolpyruvate</name>
        <dbReference type="ChEBI" id="CHEBI:58702"/>
    </ligand>
</feature>
<feature type="binding site" evidence="1">
    <location>
        <position position="102"/>
    </location>
    <ligand>
        <name>UDP-N-acetyl-alpha-D-glucosamine</name>
        <dbReference type="ChEBI" id="CHEBI:57705"/>
    </ligand>
</feature>
<feature type="binding site" evidence="1">
    <location>
        <begin position="131"/>
        <end position="135"/>
    </location>
    <ligand>
        <name>UDP-N-acetyl-alpha-D-glucosamine</name>
        <dbReference type="ChEBI" id="CHEBI:57705"/>
    </ligand>
</feature>
<feature type="binding site" evidence="1">
    <location>
        <begin position="171"/>
        <end position="174"/>
    </location>
    <ligand>
        <name>UDP-N-acetyl-alpha-D-glucosamine</name>
        <dbReference type="ChEBI" id="CHEBI:57705"/>
    </ligand>
</feature>
<feature type="binding site" evidence="1">
    <location>
        <position position="316"/>
    </location>
    <ligand>
        <name>UDP-N-acetyl-alpha-D-glucosamine</name>
        <dbReference type="ChEBI" id="CHEBI:57705"/>
    </ligand>
</feature>
<feature type="binding site" evidence="1">
    <location>
        <position position="338"/>
    </location>
    <ligand>
        <name>UDP-N-acetyl-alpha-D-glucosamine</name>
        <dbReference type="ChEBI" id="CHEBI:57705"/>
    </ligand>
</feature>
<feature type="modified residue" description="2-(S-cysteinyl)pyruvic acid O-phosphothioketal" evidence="1">
    <location>
        <position position="126"/>
    </location>
</feature>
<keyword id="KW-0131">Cell cycle</keyword>
<keyword id="KW-0132">Cell division</keyword>
<keyword id="KW-0133">Cell shape</keyword>
<keyword id="KW-0961">Cell wall biogenesis/degradation</keyword>
<keyword id="KW-0963">Cytoplasm</keyword>
<keyword id="KW-0573">Peptidoglycan synthesis</keyword>
<keyword id="KW-0670">Pyruvate</keyword>
<keyword id="KW-0808">Transferase</keyword>
<dbReference type="EC" id="2.5.1.7" evidence="1"/>
<dbReference type="EMBL" id="CP000911">
    <property type="protein sequence ID" value="ABY37373.1"/>
    <property type="molecule type" value="Genomic_DNA"/>
</dbReference>
<dbReference type="RefSeq" id="WP_002965536.1">
    <property type="nucleotide sequence ID" value="NC_010169.1"/>
</dbReference>
<dbReference type="SMR" id="B0CJN2"/>
<dbReference type="GeneID" id="97534345"/>
<dbReference type="KEGG" id="bmt:BSUIS_A0277"/>
<dbReference type="HOGENOM" id="CLU_027387_0_0_5"/>
<dbReference type="UniPathway" id="UPA00219"/>
<dbReference type="Proteomes" id="UP000008545">
    <property type="component" value="Chromosome I"/>
</dbReference>
<dbReference type="GO" id="GO:0005737">
    <property type="term" value="C:cytoplasm"/>
    <property type="evidence" value="ECO:0007669"/>
    <property type="project" value="UniProtKB-SubCell"/>
</dbReference>
<dbReference type="GO" id="GO:0008760">
    <property type="term" value="F:UDP-N-acetylglucosamine 1-carboxyvinyltransferase activity"/>
    <property type="evidence" value="ECO:0007669"/>
    <property type="project" value="UniProtKB-UniRule"/>
</dbReference>
<dbReference type="GO" id="GO:0051301">
    <property type="term" value="P:cell division"/>
    <property type="evidence" value="ECO:0007669"/>
    <property type="project" value="UniProtKB-KW"/>
</dbReference>
<dbReference type="GO" id="GO:0071555">
    <property type="term" value="P:cell wall organization"/>
    <property type="evidence" value="ECO:0007669"/>
    <property type="project" value="UniProtKB-KW"/>
</dbReference>
<dbReference type="GO" id="GO:0009252">
    <property type="term" value="P:peptidoglycan biosynthetic process"/>
    <property type="evidence" value="ECO:0007669"/>
    <property type="project" value="UniProtKB-UniRule"/>
</dbReference>
<dbReference type="GO" id="GO:0008360">
    <property type="term" value="P:regulation of cell shape"/>
    <property type="evidence" value="ECO:0007669"/>
    <property type="project" value="UniProtKB-KW"/>
</dbReference>
<dbReference type="GO" id="GO:0019277">
    <property type="term" value="P:UDP-N-acetylgalactosamine biosynthetic process"/>
    <property type="evidence" value="ECO:0007669"/>
    <property type="project" value="InterPro"/>
</dbReference>
<dbReference type="CDD" id="cd01555">
    <property type="entry name" value="UdpNAET"/>
    <property type="match status" value="1"/>
</dbReference>
<dbReference type="FunFam" id="3.65.10.10:FF:000001">
    <property type="entry name" value="UDP-N-acetylglucosamine 1-carboxyvinyltransferase"/>
    <property type="match status" value="1"/>
</dbReference>
<dbReference type="Gene3D" id="3.65.10.10">
    <property type="entry name" value="Enolpyruvate transferase domain"/>
    <property type="match status" value="2"/>
</dbReference>
<dbReference type="HAMAP" id="MF_00111">
    <property type="entry name" value="MurA"/>
    <property type="match status" value="1"/>
</dbReference>
<dbReference type="InterPro" id="IPR001986">
    <property type="entry name" value="Enolpyruvate_Tfrase_dom"/>
</dbReference>
<dbReference type="InterPro" id="IPR036968">
    <property type="entry name" value="Enolpyruvate_Tfrase_sf"/>
</dbReference>
<dbReference type="InterPro" id="IPR050068">
    <property type="entry name" value="MurA_subfamily"/>
</dbReference>
<dbReference type="InterPro" id="IPR013792">
    <property type="entry name" value="RNA3'P_cycl/enolpyr_Trfase_a/b"/>
</dbReference>
<dbReference type="InterPro" id="IPR005750">
    <property type="entry name" value="UDP_GlcNAc_COvinyl_MurA"/>
</dbReference>
<dbReference type="NCBIfam" id="TIGR01072">
    <property type="entry name" value="murA"/>
    <property type="match status" value="1"/>
</dbReference>
<dbReference type="NCBIfam" id="NF006873">
    <property type="entry name" value="PRK09369.1"/>
    <property type="match status" value="1"/>
</dbReference>
<dbReference type="PANTHER" id="PTHR43783">
    <property type="entry name" value="UDP-N-ACETYLGLUCOSAMINE 1-CARBOXYVINYLTRANSFERASE"/>
    <property type="match status" value="1"/>
</dbReference>
<dbReference type="PANTHER" id="PTHR43783:SF1">
    <property type="entry name" value="UDP-N-ACETYLGLUCOSAMINE 1-CARBOXYVINYLTRANSFERASE"/>
    <property type="match status" value="1"/>
</dbReference>
<dbReference type="Pfam" id="PF00275">
    <property type="entry name" value="EPSP_synthase"/>
    <property type="match status" value="1"/>
</dbReference>
<dbReference type="SUPFAM" id="SSF55205">
    <property type="entry name" value="EPT/RTPC-like"/>
    <property type="match status" value="1"/>
</dbReference>